<reference key="1">
    <citation type="journal article" date="2005" name="Science">
        <title>The transcriptional landscape of the mammalian genome.</title>
        <authorList>
            <person name="Carninci P."/>
            <person name="Kasukawa T."/>
            <person name="Katayama S."/>
            <person name="Gough J."/>
            <person name="Frith M.C."/>
            <person name="Maeda N."/>
            <person name="Oyama R."/>
            <person name="Ravasi T."/>
            <person name="Lenhard B."/>
            <person name="Wells C."/>
            <person name="Kodzius R."/>
            <person name="Shimokawa K."/>
            <person name="Bajic V.B."/>
            <person name="Brenner S.E."/>
            <person name="Batalov S."/>
            <person name="Forrest A.R."/>
            <person name="Zavolan M."/>
            <person name="Davis M.J."/>
            <person name="Wilming L.G."/>
            <person name="Aidinis V."/>
            <person name="Allen J.E."/>
            <person name="Ambesi-Impiombato A."/>
            <person name="Apweiler R."/>
            <person name="Aturaliya R.N."/>
            <person name="Bailey T.L."/>
            <person name="Bansal M."/>
            <person name="Baxter L."/>
            <person name="Beisel K.W."/>
            <person name="Bersano T."/>
            <person name="Bono H."/>
            <person name="Chalk A.M."/>
            <person name="Chiu K.P."/>
            <person name="Choudhary V."/>
            <person name="Christoffels A."/>
            <person name="Clutterbuck D.R."/>
            <person name="Crowe M.L."/>
            <person name="Dalla E."/>
            <person name="Dalrymple B.P."/>
            <person name="de Bono B."/>
            <person name="Della Gatta G."/>
            <person name="di Bernardo D."/>
            <person name="Down T."/>
            <person name="Engstrom P."/>
            <person name="Fagiolini M."/>
            <person name="Faulkner G."/>
            <person name="Fletcher C.F."/>
            <person name="Fukushima T."/>
            <person name="Furuno M."/>
            <person name="Futaki S."/>
            <person name="Gariboldi M."/>
            <person name="Georgii-Hemming P."/>
            <person name="Gingeras T.R."/>
            <person name="Gojobori T."/>
            <person name="Green R.E."/>
            <person name="Gustincich S."/>
            <person name="Harbers M."/>
            <person name="Hayashi Y."/>
            <person name="Hensch T.K."/>
            <person name="Hirokawa N."/>
            <person name="Hill D."/>
            <person name="Huminiecki L."/>
            <person name="Iacono M."/>
            <person name="Ikeo K."/>
            <person name="Iwama A."/>
            <person name="Ishikawa T."/>
            <person name="Jakt M."/>
            <person name="Kanapin A."/>
            <person name="Katoh M."/>
            <person name="Kawasawa Y."/>
            <person name="Kelso J."/>
            <person name="Kitamura H."/>
            <person name="Kitano H."/>
            <person name="Kollias G."/>
            <person name="Krishnan S.P."/>
            <person name="Kruger A."/>
            <person name="Kummerfeld S.K."/>
            <person name="Kurochkin I.V."/>
            <person name="Lareau L.F."/>
            <person name="Lazarevic D."/>
            <person name="Lipovich L."/>
            <person name="Liu J."/>
            <person name="Liuni S."/>
            <person name="McWilliam S."/>
            <person name="Madan Babu M."/>
            <person name="Madera M."/>
            <person name="Marchionni L."/>
            <person name="Matsuda H."/>
            <person name="Matsuzawa S."/>
            <person name="Miki H."/>
            <person name="Mignone F."/>
            <person name="Miyake S."/>
            <person name="Morris K."/>
            <person name="Mottagui-Tabar S."/>
            <person name="Mulder N."/>
            <person name="Nakano N."/>
            <person name="Nakauchi H."/>
            <person name="Ng P."/>
            <person name="Nilsson R."/>
            <person name="Nishiguchi S."/>
            <person name="Nishikawa S."/>
            <person name="Nori F."/>
            <person name="Ohara O."/>
            <person name="Okazaki Y."/>
            <person name="Orlando V."/>
            <person name="Pang K.C."/>
            <person name="Pavan W.J."/>
            <person name="Pavesi G."/>
            <person name="Pesole G."/>
            <person name="Petrovsky N."/>
            <person name="Piazza S."/>
            <person name="Reed J."/>
            <person name="Reid J.F."/>
            <person name="Ring B.Z."/>
            <person name="Ringwald M."/>
            <person name="Rost B."/>
            <person name="Ruan Y."/>
            <person name="Salzberg S.L."/>
            <person name="Sandelin A."/>
            <person name="Schneider C."/>
            <person name="Schoenbach C."/>
            <person name="Sekiguchi K."/>
            <person name="Semple C.A."/>
            <person name="Seno S."/>
            <person name="Sessa L."/>
            <person name="Sheng Y."/>
            <person name="Shibata Y."/>
            <person name="Shimada H."/>
            <person name="Shimada K."/>
            <person name="Silva D."/>
            <person name="Sinclair B."/>
            <person name="Sperling S."/>
            <person name="Stupka E."/>
            <person name="Sugiura K."/>
            <person name="Sultana R."/>
            <person name="Takenaka Y."/>
            <person name="Taki K."/>
            <person name="Tammoja K."/>
            <person name="Tan S.L."/>
            <person name="Tang S."/>
            <person name="Taylor M.S."/>
            <person name="Tegner J."/>
            <person name="Teichmann S.A."/>
            <person name="Ueda H.R."/>
            <person name="van Nimwegen E."/>
            <person name="Verardo R."/>
            <person name="Wei C.L."/>
            <person name="Yagi K."/>
            <person name="Yamanishi H."/>
            <person name="Zabarovsky E."/>
            <person name="Zhu S."/>
            <person name="Zimmer A."/>
            <person name="Hide W."/>
            <person name="Bult C."/>
            <person name="Grimmond S.M."/>
            <person name="Teasdale R.D."/>
            <person name="Liu E.T."/>
            <person name="Brusic V."/>
            <person name="Quackenbush J."/>
            <person name="Wahlestedt C."/>
            <person name="Mattick J.S."/>
            <person name="Hume D.A."/>
            <person name="Kai C."/>
            <person name="Sasaki D."/>
            <person name="Tomaru Y."/>
            <person name="Fukuda S."/>
            <person name="Kanamori-Katayama M."/>
            <person name="Suzuki M."/>
            <person name="Aoki J."/>
            <person name="Arakawa T."/>
            <person name="Iida J."/>
            <person name="Imamura K."/>
            <person name="Itoh M."/>
            <person name="Kato T."/>
            <person name="Kawaji H."/>
            <person name="Kawagashira N."/>
            <person name="Kawashima T."/>
            <person name="Kojima M."/>
            <person name="Kondo S."/>
            <person name="Konno H."/>
            <person name="Nakano K."/>
            <person name="Ninomiya N."/>
            <person name="Nishio T."/>
            <person name="Okada M."/>
            <person name="Plessy C."/>
            <person name="Shibata K."/>
            <person name="Shiraki T."/>
            <person name="Suzuki S."/>
            <person name="Tagami M."/>
            <person name="Waki K."/>
            <person name="Watahiki A."/>
            <person name="Okamura-Oho Y."/>
            <person name="Suzuki H."/>
            <person name="Kawai J."/>
            <person name="Hayashizaki Y."/>
        </authorList>
    </citation>
    <scope>NUCLEOTIDE SEQUENCE [LARGE SCALE MRNA]</scope>
    <source>
        <strain>C57BL/6J</strain>
        <tissue>Testis</tissue>
    </source>
</reference>
<reference key="2">
    <citation type="journal article" date="2004" name="Genome Res.">
        <title>The status, quality, and expansion of the NIH full-length cDNA project: the Mammalian Gene Collection (MGC).</title>
        <authorList>
            <consortium name="The MGC Project Team"/>
        </authorList>
    </citation>
    <scope>NUCLEOTIDE SEQUENCE [LARGE SCALE MRNA]</scope>
</reference>
<reference key="3">
    <citation type="journal article" date="2010" name="Cell">
        <title>A tissue-specific atlas of mouse protein phosphorylation and expression.</title>
        <authorList>
            <person name="Huttlin E.L."/>
            <person name="Jedrychowski M.P."/>
            <person name="Elias J.E."/>
            <person name="Goswami T."/>
            <person name="Rad R."/>
            <person name="Beausoleil S.A."/>
            <person name="Villen J."/>
            <person name="Haas W."/>
            <person name="Sowa M.E."/>
            <person name="Gygi S.P."/>
        </authorList>
    </citation>
    <scope>IDENTIFICATION BY MASS SPECTROMETRY [LARGE SCALE ANALYSIS]</scope>
    <source>
        <tissue>Testis</tissue>
    </source>
</reference>
<proteinExistence type="evidence at protein level"/>
<accession>Q149M0</accession>
<accession>Q9D403</accession>
<protein>
    <recommendedName>
        <fullName>C-type lectin domain family 12 member B</fullName>
    </recommendedName>
</protein>
<gene>
    <name type="primary">Clec12b</name>
</gene>
<dbReference type="EMBL" id="AK016908">
    <property type="protein sequence ID" value="BAB30491.1"/>
    <property type="molecule type" value="mRNA"/>
</dbReference>
<dbReference type="EMBL" id="BC117712">
    <property type="protein sequence ID" value="AAI17713.1"/>
    <property type="molecule type" value="mRNA"/>
</dbReference>
<dbReference type="CCDS" id="CCDS51922.1"/>
<dbReference type="RefSeq" id="NP_001191152.1">
    <property type="nucleotide sequence ID" value="NM_001204223.1"/>
</dbReference>
<dbReference type="RefSeq" id="NP_081985.1">
    <property type="nucleotide sequence ID" value="NM_027709.2"/>
</dbReference>
<dbReference type="RefSeq" id="XP_006506675.1">
    <property type="nucleotide sequence ID" value="XM_006506612.1"/>
</dbReference>
<dbReference type="SMR" id="Q149M0"/>
<dbReference type="FunCoup" id="Q149M0">
    <property type="interactions" value="17"/>
</dbReference>
<dbReference type="STRING" id="10090.ENSMUSP00000032261"/>
<dbReference type="GlyCosmos" id="Q149M0">
    <property type="glycosylation" value="3 sites, No reported glycans"/>
</dbReference>
<dbReference type="GlyGen" id="Q149M0">
    <property type="glycosylation" value="3 sites"/>
</dbReference>
<dbReference type="PhosphoSitePlus" id="Q149M0"/>
<dbReference type="PaxDb" id="10090-ENSMUSP00000107713"/>
<dbReference type="ProteomicsDB" id="281636"/>
<dbReference type="GeneID" id="71183"/>
<dbReference type="KEGG" id="mmu:71183"/>
<dbReference type="UCSC" id="uc009efm.2">
    <property type="organism name" value="mouse"/>
</dbReference>
<dbReference type="AGR" id="MGI:1918433"/>
<dbReference type="CTD" id="387837"/>
<dbReference type="MGI" id="MGI:1918433">
    <property type="gene designation" value="Clec12b"/>
</dbReference>
<dbReference type="eggNOG" id="KOG4297">
    <property type="taxonomic scope" value="Eukaryota"/>
</dbReference>
<dbReference type="InParanoid" id="Q149M0"/>
<dbReference type="OrthoDB" id="6337382at2759"/>
<dbReference type="PhylomeDB" id="Q149M0"/>
<dbReference type="TreeFam" id="TF336674"/>
<dbReference type="BioGRID-ORCS" id="71183">
    <property type="hits" value="3 hits in 76 CRISPR screens"/>
</dbReference>
<dbReference type="PRO" id="PR:Q149M0"/>
<dbReference type="Proteomes" id="UP000000589">
    <property type="component" value="Unplaced"/>
</dbReference>
<dbReference type="RNAct" id="Q149M0">
    <property type="molecule type" value="protein"/>
</dbReference>
<dbReference type="GO" id="GO:0005886">
    <property type="term" value="C:plasma membrane"/>
    <property type="evidence" value="ECO:0007669"/>
    <property type="project" value="UniProtKB-SubCell"/>
</dbReference>
<dbReference type="GO" id="GO:0030246">
    <property type="term" value="F:carbohydrate binding"/>
    <property type="evidence" value="ECO:0007669"/>
    <property type="project" value="UniProtKB-KW"/>
</dbReference>
<dbReference type="GO" id="GO:0019903">
    <property type="term" value="F:protein phosphatase binding"/>
    <property type="evidence" value="ECO:0000250"/>
    <property type="project" value="UniProtKB"/>
</dbReference>
<dbReference type="GO" id="GO:0030545">
    <property type="term" value="F:signaling receptor regulator activity"/>
    <property type="evidence" value="ECO:0007669"/>
    <property type="project" value="InterPro"/>
</dbReference>
<dbReference type="GO" id="GO:0097325">
    <property type="term" value="P:melanocyte proliferation"/>
    <property type="evidence" value="ECO:0000250"/>
    <property type="project" value="UniProtKB"/>
</dbReference>
<dbReference type="GO" id="GO:1904893">
    <property type="term" value="P:negative regulation of receptor signaling pathway via STAT"/>
    <property type="evidence" value="ECO:0000250"/>
    <property type="project" value="UniProtKB"/>
</dbReference>
<dbReference type="CDD" id="cd03593">
    <property type="entry name" value="CLECT_NK_receptors_like"/>
    <property type="match status" value="1"/>
</dbReference>
<dbReference type="FunFam" id="3.10.100.10:FF:000210">
    <property type="entry name" value="C-type lectin domain family 12 member B"/>
    <property type="match status" value="1"/>
</dbReference>
<dbReference type="Gene3D" id="3.10.100.10">
    <property type="entry name" value="Mannose-Binding Protein A, subunit A"/>
    <property type="match status" value="1"/>
</dbReference>
<dbReference type="InterPro" id="IPR001304">
    <property type="entry name" value="C-type_lectin-like"/>
</dbReference>
<dbReference type="InterPro" id="IPR016186">
    <property type="entry name" value="C-type_lectin-like/link_sf"/>
</dbReference>
<dbReference type="InterPro" id="IPR042916">
    <property type="entry name" value="CLEC12A/B"/>
</dbReference>
<dbReference type="InterPro" id="IPR016187">
    <property type="entry name" value="CTDL_fold"/>
</dbReference>
<dbReference type="InterPro" id="IPR013600">
    <property type="entry name" value="Ly49_N"/>
</dbReference>
<dbReference type="InterPro" id="IPR033992">
    <property type="entry name" value="NKR-like_CTLD"/>
</dbReference>
<dbReference type="PANTHER" id="PTHR47647">
    <property type="entry name" value="C-TYPE LECTIN DOMAIN FAMILY 12 MEMBER B"/>
    <property type="match status" value="1"/>
</dbReference>
<dbReference type="PANTHER" id="PTHR47647:SF1">
    <property type="entry name" value="C-TYPE LECTIN DOMAIN FAMILY 12 MEMBER B"/>
    <property type="match status" value="1"/>
</dbReference>
<dbReference type="Pfam" id="PF00059">
    <property type="entry name" value="Lectin_C"/>
    <property type="match status" value="1"/>
</dbReference>
<dbReference type="Pfam" id="PF08391">
    <property type="entry name" value="Ly49"/>
    <property type="match status" value="1"/>
</dbReference>
<dbReference type="SMART" id="SM00034">
    <property type="entry name" value="CLECT"/>
    <property type="match status" value="1"/>
</dbReference>
<dbReference type="SUPFAM" id="SSF56436">
    <property type="entry name" value="C-type lectin-like"/>
    <property type="match status" value="1"/>
</dbReference>
<dbReference type="PROSITE" id="PS50041">
    <property type="entry name" value="C_TYPE_LECTIN_2"/>
    <property type="match status" value="1"/>
</dbReference>
<sequence>MSDEVTYATLMLQDSARVRGNQDGNNLRKEGHPAQSSLWRGAALSLMTLCLVLVTGLVTLATMFLQVSNDINSDSEKLSQLQKSIHPQQDNLSESLNSSRKSLTEESLQSQISALLERQEQMATKLCKEFLIHASDHKCNPCPKTWQWYGNSCYYFSINEEKSWSDSRKDCIDKNATLVKIDSTEERDLLQSQLSLTFSFFWLGLSWNSSGRNWLWEDGSFPPPTLFSDKELASFNGSRDCAYFERGNIYASRCSAEIPWICEKTASLVKTEDLD</sequence>
<comment type="function">
    <text evidence="1">Inhibitory receptor postulated to negatively regulate immune and non-immune functions (By similarity). Upon phosphorylation, recruits SH2 domain-containing PTPN6 and PTPN11 phosphatases to its ITIM motif and antagonizes activation signals (By similarity). Although it inhibits KLRK1/NKG2D-mediated signaling, it does not bind known ligands of KLRK1/NKG2D and therefore is not its inhibitory counterpart (By similarity). May limit activation of myeloid cell subsets in response to infection or tissue inflammation (By similarity). May protect target cells against natural killer cell-mediated lysis (By similarity). May negatively regulate cell cycle and differentiation of melanocytes via inactivation of STAT3 (By similarity).</text>
</comment>
<comment type="subunit">
    <text evidence="1">Homodimer. Interacts (via ITIM motif) with PTPN6. Interacts (via ITIM motif) with PTPN11; this interaction triggers dephosphorylation and activation of PTPN11.</text>
</comment>
<comment type="subcellular location">
    <subcellularLocation>
        <location evidence="1">Cell membrane</location>
        <topology evidence="2">Single-pass type II membrane protein</topology>
    </subcellularLocation>
</comment>
<comment type="domain">
    <text evidence="1">Contains 1 copy of a cytoplasmic motif that is referred to as the immunoreceptor tyrosine-based inhibitor motif (ITIM). This motif is involved in modulation of cellular responses. The phosphorylated ITIM motif can bind the SH2 domain of several SH2-containing phosphatases.</text>
</comment>
<evidence type="ECO:0000250" key="1">
    <source>
        <dbReference type="UniProtKB" id="Q2HXU8"/>
    </source>
</evidence>
<evidence type="ECO:0000255" key="2"/>
<evidence type="ECO:0000255" key="3">
    <source>
        <dbReference type="PROSITE-ProRule" id="PRU00040"/>
    </source>
</evidence>
<evidence type="ECO:0000305" key="4"/>
<feature type="chain" id="PRO_0000313582" description="C-type lectin domain family 12 member B">
    <location>
        <begin position="1"/>
        <end position="275"/>
    </location>
</feature>
<feature type="topological domain" description="Cytoplasmic" evidence="2">
    <location>
        <begin position="1"/>
        <end position="41"/>
    </location>
</feature>
<feature type="transmembrane region" description="Helical; Signal-anchor for type II membrane protein" evidence="2">
    <location>
        <begin position="42"/>
        <end position="64"/>
    </location>
</feature>
<feature type="topological domain" description="Extracellular" evidence="2">
    <location>
        <begin position="65"/>
        <end position="275"/>
    </location>
</feature>
<feature type="domain" description="C-type lectin" evidence="3">
    <location>
        <begin position="149"/>
        <end position="263"/>
    </location>
</feature>
<feature type="short sequence motif" description="ITIM motif" evidence="1">
    <location>
        <begin position="5"/>
        <end position="10"/>
    </location>
</feature>
<feature type="modified residue" description="Phosphotyrosine" evidence="1">
    <location>
        <position position="7"/>
    </location>
</feature>
<feature type="glycosylation site" description="N-linked (GlcNAc...) asparagine" evidence="2">
    <location>
        <position position="91"/>
    </location>
</feature>
<feature type="glycosylation site" description="N-linked (GlcNAc...) asparagine" evidence="2">
    <location>
        <position position="175"/>
    </location>
</feature>
<feature type="glycosylation site" description="N-linked (GlcNAc...) asparagine" evidence="2">
    <location>
        <position position="236"/>
    </location>
</feature>
<feature type="disulfide bond" evidence="3">
    <location>
        <begin position="171"/>
        <end position="262"/>
    </location>
</feature>
<feature type="disulfide bond" evidence="3">
    <location>
        <begin position="241"/>
        <end position="254"/>
    </location>
</feature>
<feature type="sequence conflict" description="In Ref. 1; BAB30491." evidence="4" ref="1">
    <original>Q</original>
    <variation>R</variation>
    <location>
        <position position="22"/>
    </location>
</feature>
<feature type="sequence conflict" description="In Ref. 1; BAB30491." evidence="4" ref="1">
    <original>F</original>
    <variation>L</variation>
    <location>
        <position position="227"/>
    </location>
</feature>
<feature type="sequence conflict" description="In Ref. 1; BAB30491." evidence="4" ref="1">
    <original>D</original>
    <variation>E</variation>
    <location>
        <position position="240"/>
    </location>
</feature>
<feature type="sequence conflict" description="In Ref. 1; BAB30491." evidence="4" ref="1">
    <original>A</original>
    <variation>T</variation>
    <location>
        <position position="251"/>
    </location>
</feature>
<feature type="sequence conflict" description="In Ref. 1; BAB30491." evidence="4" ref="1">
    <original>S</original>
    <variation>R</variation>
    <location>
        <position position="255"/>
    </location>
</feature>
<feature type="sequence conflict" description="In Ref. 1; BAB30491." evidence="4" ref="1">
    <original>T</original>
    <variation>R</variation>
    <location>
        <position position="265"/>
    </location>
</feature>
<feature type="sequence conflict" description="In Ref. 1; BAB30491." evidence="4" ref="1">
    <original>T</original>
    <variation>I</variation>
    <location>
        <position position="271"/>
    </location>
</feature>
<name>CL12B_MOUSE</name>
<keyword id="KW-1003">Cell membrane</keyword>
<keyword id="KW-1015">Disulfide bond</keyword>
<keyword id="KW-0325">Glycoprotein</keyword>
<keyword id="KW-0430">Lectin</keyword>
<keyword id="KW-0472">Membrane</keyword>
<keyword id="KW-0597">Phosphoprotein</keyword>
<keyword id="KW-0675">Receptor</keyword>
<keyword id="KW-1185">Reference proteome</keyword>
<keyword id="KW-0735">Signal-anchor</keyword>
<keyword id="KW-0812">Transmembrane</keyword>
<keyword id="KW-1133">Transmembrane helix</keyword>
<organism>
    <name type="scientific">Mus musculus</name>
    <name type="common">Mouse</name>
    <dbReference type="NCBI Taxonomy" id="10090"/>
    <lineage>
        <taxon>Eukaryota</taxon>
        <taxon>Metazoa</taxon>
        <taxon>Chordata</taxon>
        <taxon>Craniata</taxon>
        <taxon>Vertebrata</taxon>
        <taxon>Euteleostomi</taxon>
        <taxon>Mammalia</taxon>
        <taxon>Eutheria</taxon>
        <taxon>Euarchontoglires</taxon>
        <taxon>Glires</taxon>
        <taxon>Rodentia</taxon>
        <taxon>Myomorpha</taxon>
        <taxon>Muroidea</taxon>
        <taxon>Muridae</taxon>
        <taxon>Murinae</taxon>
        <taxon>Mus</taxon>
        <taxon>Mus</taxon>
    </lineage>
</organism>